<evidence type="ECO:0000269" key="1">
    <source>
    </source>
</evidence>
<evidence type="ECO:0000269" key="2">
    <source>
    </source>
</evidence>
<evidence type="ECO:0000269" key="3">
    <source>
    </source>
</evidence>
<evidence type="ECO:0000269" key="4">
    <source>
    </source>
</evidence>
<evidence type="ECO:0000269" key="5">
    <source>
    </source>
</evidence>
<evidence type="ECO:0000269" key="6">
    <source>
    </source>
</evidence>
<evidence type="ECO:0000269" key="7">
    <source>
    </source>
</evidence>
<evidence type="ECO:0000269" key="8">
    <source>
    </source>
</evidence>
<evidence type="ECO:0000269" key="9">
    <source>
    </source>
</evidence>
<evidence type="ECO:0000269" key="10">
    <source ref="4"/>
</evidence>
<evidence type="ECO:0000269" key="11">
    <source ref="5"/>
</evidence>
<evidence type="ECO:0000303" key="12">
    <source>
    </source>
</evidence>
<evidence type="ECO:0000305" key="13"/>
<evidence type="ECO:0000305" key="14">
    <source>
    </source>
</evidence>
<evidence type="ECO:0000305" key="15">
    <source>
    </source>
</evidence>
<feature type="chain" id="PRO_0000182663" description="Gas vesicle protein C">
    <location>
        <begin position="1"/>
        <end position="193"/>
    </location>
</feature>
<feature type="repeat" evidence="14">
    <location>
        <begin position="19"/>
        <end position="51"/>
    </location>
</feature>
<feature type="repeat" evidence="14">
    <location>
        <begin position="52"/>
        <end position="84"/>
    </location>
</feature>
<feature type="repeat" evidence="14">
    <location>
        <begin position="85"/>
        <end position="117"/>
    </location>
</feature>
<feature type="repeat" evidence="14">
    <location>
        <begin position="118"/>
        <end position="150"/>
    </location>
</feature>
<feature type="repeat" evidence="14">
    <location>
        <begin position="151"/>
        <end position="183"/>
    </location>
</feature>
<feature type="region of interest" description="5 X 33 AA tandem repeats" evidence="14">
    <location>
        <begin position="19"/>
        <end position="183"/>
    </location>
</feature>
<feature type="sequence variant" description="In strain: CCAP 1401/1.">
    <original>S</original>
    <variation>P</variation>
    <location>
        <position position="3"/>
    </location>
</feature>
<feature type="sequence variant" description="In strain: CCAP 1401/1.">
    <original>MA</original>
    <variation>IT</variation>
    <location>
        <begin position="5"/>
        <end position="6"/>
    </location>
</feature>
<feature type="sequence variant" description="In strain: CCAP 1401/1.">
    <original>AE</original>
    <variation>VK</variation>
    <location>
        <begin position="16"/>
        <end position="17"/>
    </location>
</feature>
<feature type="mutagenesis site" description="Missing last 3 repeats, restores gas vesicle stability 70% as well as wild-type." evidence="8">
    <location>
        <begin position="85"/>
        <end position="183"/>
    </location>
</feature>
<feature type="mutagenesis site" description="Missing last 2 repeats, restores gas vesicle stability 80% as well as wild-type." evidence="8">
    <location>
        <begin position="118"/>
        <end position="183"/>
    </location>
</feature>
<feature type="mutagenesis site" description="Missing last repeat, restores gas vesicle stability 80% as well as wild-type." evidence="8">
    <location>
        <begin position="151"/>
        <end position="183"/>
    </location>
</feature>
<keyword id="KW-0903">Direct protein sequencing</keyword>
<keyword id="KW-0304">Gas vesicle</keyword>
<keyword id="KW-0677">Repeat</keyword>
<proteinExistence type="evidence at protein level"/>
<comment type="function">
    <text evidence="1 3 8 9 10 11 14">Confers stability, involved in shaping gas vesicles (GV), hollow, gas-filled proteinaceous nanostructures. During planktonic growth they allow positioning of the organism at a favorable depth for light or nutrient acquisition (Probable) (Ref.4). The ratio of GvpA:GvpC is estimated to be 25:1 (PubMed:7476201, PubMed:8254305). GvpC strengthens the GV wall, probably by connecting several GvpA proteins in the same and/or adjacent ribs (Probable) (PubMed:1510555, PubMed:16735729, PubMed:7476201, Ref.5). Removal of GvpC by SDS reduces the critical collapse pressure (CCP) of stored gas vesicles from 0.23 Mpa to 0.08 MPa (Ref.5). Removal of GvpC by urea reduces CCP of freshly isolated GVs from 0.550 MPa to 0.190 MPa; addition of recombinant GvpC restores CCP to 0.508 MPa. As the turgor pressure in this species is usually 0.35 MPa (plus the water column pressure in its growth environment), this protein is essential for GV formation (PubMed:1510555).</text>
</comment>
<comment type="subcellular location">
    <subcellularLocation>
        <location evidence="1 2 6 7 8 9 11">Gas vesicle</location>
    </subcellularLocation>
    <text evidence="1 2 3 6 7 8 9 11">Binds to the entire external surface of the gas vesicle (PubMed:1510555, PubMed:1527496, PubMed:16735729, PubMed:3141741, PubMed:32661379, PubMed:7476201, PubMed:8254305, Ref.5). Trypsin cleaves most of the expected sites in intact vesicles, suggesting all of GvpC is on the surface (PubMed:16735729).</text>
</comment>
<comment type="induction">
    <text evidence="10">Gas vesicles are abundant in low light, and collapse after exposure to high light.</text>
</comment>
<comment type="domain">
    <text evidence="15">The tandem repeats probably bind across adjacent GvpA ribs with each repeat contacting 5 GvpA subunits, stiffening the vesicle.</text>
</comment>
<comment type="mass spectrometry" mass="21961.0" method="MALDI" evidence="3"/>
<comment type="biotechnology">
    <text evidence="4">Can be used as an oxygen carrier in mammalian cell culture; addition of 1.8% GVs in the medium enhanced the maximum glucose utilization rate by about 30%. The GVs have both GvpA and GvpC.</text>
</comment>
<comment type="biotechnology">
    <text evidence="5 7">Engineered gas vesicles (GV) can be used for noninvasive imaging in bacteria and mice. Heterologous GVs with 2 copies of gvpA plus gvpC from this bacteria and the gvpR-gvpU operon from P.megaterium make GVs suitable for imaging of bacteria deep in mouse tissues (e.g. the gastrointestinal tract), or when expressed in tumor-homing bacteria, can be detected in tumors (PubMed:29300010). Can be used to make acoustic biosensors for ultrasound imaging. Insertion of a protease target site in GvpC and subsequent exposure to the protease leads to GVs that collapse at lower hydrostatic pressures; both endoproteases and processive exoproteases can be used. Controlling GvpC degradation allows controlled GV collapse and changes in ultrasound images (PubMed:32661379).</text>
</comment>
<comment type="miscellaneous">
    <text evidence="6">Protein sequence was derived from constitutive gas vesicle producer strain CCAP 1403/13f, DNA sequence from CCAP 1403/13d, a spontaneous mutant which does not produce gas vesicles.</text>
</comment>
<comment type="similarity">
    <text evidence="13">Belongs to the gas vesicle GvpC family.</text>
</comment>
<accession>P09413</accession>
<protein>
    <recommendedName>
        <fullName evidence="12">Gas vesicle protein C</fullName>
        <shortName evidence="12">GVPc</shortName>
    </recommendedName>
</protein>
<reference key="1">
    <citation type="journal article" date="1988" name="Mol. Microbiol.">
        <title>The protein encoded by gvpC is a minor component of gas vesicles isolated from the cyanobacteria Anabaena flos-aquae and Microcystis sp.</title>
        <authorList>
            <person name="Hayes P.K."/>
            <person name="Lazarus C.M."/>
            <person name="Bees A."/>
            <person name="Walker J.E."/>
            <person name="Walsby A.E."/>
        </authorList>
    </citation>
    <scope>NUCLEOTIDE SEQUENCE [GENOMIC DNA]</scope>
    <scope>PROTEIN SEQUENCE OF 1-18; 28-35; 54-69 AND 153-169</scope>
    <scope>FUNCTION</scope>
    <scope>SUBCELLULAR LOCATION</scope>
    <scope>REPEATS</scope>
    <scope>PROTEIN ABUNDANCE</scope>
    <source>
        <strain>CCAP 1403/13d</strain>
        <strain>CCAP 1403/13f</strain>
    </source>
</reference>
<reference key="2">
    <citation type="journal article" date="1997" name="DNA Seq.">
        <title>Genes encoding proteins homologous to halobacterial Gvps N, J, K, F and L are located downstream of gvpC in the cyanobacterium Anabaena flos-aquae.</title>
        <authorList>
            <person name="Kinsman R."/>
            <person name="Hayes P.K."/>
        </authorList>
    </citation>
    <scope>NUCLEOTIDE SEQUENCE [GENOMIC DNA]</scope>
    <source>
        <strain>CCAP 1403/13f</strain>
    </source>
</reference>
<reference key="3">
    <citation type="journal article" date="1992" name="J. Gen. Microbiol.">
        <title>The homologies of gas vesicle proteins.</title>
        <authorList>
            <person name="Griffiths A.E."/>
            <person name="Walsby A.E."/>
            <person name="Hayes P.K."/>
        </authorList>
    </citation>
    <scope>PROTEIN SEQUENCE OF 1-62</scope>
    <scope>SUBCELLULAR LOCATION</scope>
    <source>
        <strain>CCAP 1401/1</strain>
    </source>
</reference>
<reference key="4">
    <citation type="journal article" date="1984" name="Limnol. Oceanogr.">
        <title>Direct evidence for the role of light-mediated gas vesicle collapse in the buoyancy regulation of Anabaena flos-aquae (cyanobacteria).</title>
        <authorList>
            <person name="Oliver R.A."/>
            <person name="Walsby A.E."/>
        </authorList>
    </citation>
    <scope>GAS VESICLE FUNCTION</scope>
    <scope>INDUCTION</scope>
    <source>
        <strain>CCAP 1403/13f</strain>
    </source>
</reference>
<reference key="5">
    <citation type="journal article" date="1988" name="J. Gen. Microbiol.">
        <title>The Minor Cyanobacterial Gas Vesicle Protein, GVPc, Is Attached to the Outer Surface of the Gas Vesicle.</title>
        <authorList>
            <person name="Walsby A.E."/>
            <person name="Hayes P.K."/>
        </authorList>
    </citation>
    <scope>FUNCTION</scope>
    <scope>SUBCELLULAR LOCATION</scope>
    <source>
        <strain>CCAP 1403/13f</strain>
    </source>
</reference>
<reference key="6">
    <citation type="journal article" date="1992" name="Arch. Microbiol.">
        <title>Gas vesicles are strengthened by the outer-surface protein, GvpC.</title>
        <authorList>
            <person name="Hayes P.K."/>
            <person name="Buchholz B."/>
            <person name="Walsby A.E."/>
        </authorList>
    </citation>
    <scope>FUNCTION</scope>
    <scope>SUBCELLULAR LOCATION</scope>
    <source>
        <strain>CCAP 1403/13f</strain>
    </source>
</reference>
<reference key="7">
    <citation type="journal article" date="1993" name="J. Gen. Microbiol.">
        <title>The distribution of the outer gas vesicle protein, GvpC, on the Anabaena gas vesicle, and its ratio to GvpA.</title>
        <authorList>
            <person name="Buchholz B.E."/>
            <person name="Hayes P.K."/>
            <person name="Walsby A.E."/>
        </authorList>
    </citation>
    <scope>SUBCELLULAR LOCATION</scope>
    <source>
        <strain>CCAP 1403/13f</strain>
    </source>
</reference>
<reference key="8">
    <citation type="journal article" date="1995" name="Mol. Microbiol.">
        <title>GvpCs with reduced numbers of repeating sequence elements bind to and strengthen cyanobacterial gas vesicles.</title>
        <authorList>
            <person name="Kinsman R."/>
            <person name="Walsby A.E."/>
            <person name="Hayes P.K."/>
        </authorList>
    </citation>
    <scope>FUNCTION</scope>
    <scope>SUBCELLULAR LOCATION</scope>
    <scope>DOMAIN</scope>
    <scope>REPEAT</scope>
    <scope>MUTAGENESIS OF 85-HIS--PHE-183; 118-TYR--PHE-183 AND 151-HIS--PHE-183</scope>
    <source>
        <strain>CCAP 1403/13f</strain>
    </source>
</reference>
<reference key="9">
    <citation type="journal article" date="2006" name="Cytotechnology">
        <title>Use of cyanobacterial gas vesicles as oxygen carriers in cell culture.</title>
        <authorList>
            <person name="Sundararajan A."/>
            <person name="Ju L.K."/>
        </authorList>
    </citation>
    <scope>BIOTECHNOLOGY</scope>
    <source>
        <strain>CCAP 1403/13f</strain>
    </source>
</reference>
<reference key="10">
    <citation type="journal article" date="2006" name="Microbiology">
        <title>Analysis of tryptic digests indicates regions of GvpC that bind to gas vesicles of Anabaena flos-aquae.</title>
        <authorList>
            <person name="Dunton P.G."/>
            <person name="Mawby W.J."/>
            <person name="Shaw V.A."/>
            <person name="Walsby A.E."/>
        </authorList>
    </citation>
    <scope>FUNCTION</scope>
    <scope>SUBCELLULAR LOCATION</scope>
    <scope>TOPOLOGY</scope>
    <scope>MASS SPECTROMETRY</scope>
</reference>
<reference key="11">
    <citation type="journal article" date="2018" name="Nature">
        <title>Acoustic reporter genes for noninvasive imaging of microorganisms in mammalian hosts.</title>
        <authorList>
            <person name="Bourdeau R.W."/>
            <person name="Lee-Gosselin A."/>
            <person name="Lakshmanan A."/>
            <person name="Farhadi A."/>
            <person name="Kumar S.R."/>
            <person name="Nety S.P."/>
            <person name="Shapiro M.G."/>
        </authorList>
    </citation>
    <scope>BIOTECHNOLOGY</scope>
</reference>
<reference key="12">
    <citation type="journal article" date="2020" name="Nat. Chem. Biol.">
        <title>Acoustic biosensors for ultrasound imaging of enzyme activity.</title>
        <authorList>
            <person name="Lakshmanan A."/>
            <person name="Jin Z."/>
            <person name="Nety S.P."/>
            <person name="Sawyer D.P."/>
            <person name="Lee-Gosselin A."/>
            <person name="Malounda D."/>
            <person name="Swift M.B."/>
            <person name="Maresca D."/>
            <person name="Shapiro M.G."/>
        </authorList>
    </citation>
    <scope>SUBCELLULAR LOCATION</scope>
    <scope>BIOTECHNOLOGY</scope>
</reference>
<sequence length="193" mass="21986">MISLMAKIRQEHQSIAEKVAELSLETREFLSVTTAKRQEQAEKQAQELQAFYKDLQETSQQFLSETAQARIAQAEKQAQELLAFHKELQETSQQFLSATAQARIAQAEKQAQELLAFYQEVRETSQQFLSATAQARIAQAEKQAQELLAFHKELQETSQQFLSATADARTAQAKEQKESLLKFRQDLFVSIFG</sequence>
<gene>
    <name evidence="12" type="primary">gvpC</name>
</gene>
<dbReference type="EMBL" id="X07544">
    <property type="protein sequence ID" value="CAA30417.1"/>
    <property type="molecule type" value="Genomic_DNA"/>
</dbReference>
<dbReference type="EMBL" id="U17109">
    <property type="protein sequence ID" value="AAA58710.1"/>
    <property type="molecule type" value="Genomic_DNA"/>
</dbReference>
<dbReference type="PIR" id="S03092">
    <property type="entry name" value="S03092"/>
</dbReference>
<dbReference type="SMR" id="P09413"/>
<dbReference type="GO" id="GO:0031411">
    <property type="term" value="C:gas vesicle"/>
    <property type="evidence" value="ECO:0007669"/>
    <property type="project" value="UniProtKB-SubCell"/>
</dbReference>
<dbReference type="GO" id="GO:0031412">
    <property type="term" value="P:gas vesicle organization"/>
    <property type="evidence" value="ECO:0007669"/>
    <property type="project" value="InterPro"/>
</dbReference>
<dbReference type="InterPro" id="IPR002003">
    <property type="entry name" value="Gas-vesicle_GvpC"/>
</dbReference>
<dbReference type="InterPro" id="IPR018185">
    <property type="entry name" value="Gas_vesicle_C_repeat"/>
</dbReference>
<dbReference type="NCBIfam" id="TIGR02641">
    <property type="entry name" value="gvpC_cyan_rpt"/>
    <property type="match status" value="5"/>
</dbReference>
<dbReference type="Pfam" id="PF01304">
    <property type="entry name" value="Gas_vesicle_C"/>
    <property type="match status" value="5"/>
</dbReference>
<dbReference type="PROSITE" id="PS00235">
    <property type="entry name" value="GAS_VESICLE_C"/>
    <property type="match status" value="5"/>
</dbReference>
<name>GVPC_DOLFA</name>
<organism>
    <name type="scientific">Dolichospermum flosaquae</name>
    <name type="common">Anabaena flos-aquae</name>
    <dbReference type="NCBI Taxonomy" id="1166"/>
    <lineage>
        <taxon>Bacteria</taxon>
        <taxon>Bacillati</taxon>
        <taxon>Cyanobacteriota</taxon>
        <taxon>Cyanophyceae</taxon>
        <taxon>Nostocales</taxon>
        <taxon>Aphanizomenonaceae</taxon>
        <taxon>Dolichospermum</taxon>
    </lineage>
</organism>